<comment type="similarity">
    <text evidence="1">To M.jannaschii MJ0977 C-terminal region.</text>
</comment>
<protein>
    <recommendedName>
        <fullName>Uncharacterized protein MJ1071</fullName>
    </recommendedName>
</protein>
<sequence length="313" mass="37221">MAFDEICDEIILNYEDAKDFAYILKLTYLNEFKKLENLNLNKFGIIKKDDLSFYGKNYPLFKSLLFFNEIPVFRGEKESILFLKSIGLSPRITLNSLTYKEKIKLGNEFLKRCINFVPKEYISYIPQLIFGKEYYFRGVCLKEYVSALNGLYKIGKKKKVKKLIINMELPDEKDVKKYKKKLAKKITLFNKKLENYEINYFNLKFNNKNFECQYIYVKQSVWDKILGLFGEGIELKYYPTLVNIAYSSEKVDFLKPFFIFVDKGDISVYAKVPKLIYLKDGLSLNYLNLRGKYVYFGNWEKDKFWEIIERGVL</sequence>
<dbReference type="EMBL" id="L77117">
    <property type="protein sequence ID" value="AAB99078.1"/>
    <property type="molecule type" value="Genomic_DNA"/>
</dbReference>
<dbReference type="PIR" id="F64433">
    <property type="entry name" value="F64433"/>
</dbReference>
<dbReference type="RefSeq" id="WP_010870583.1">
    <property type="nucleotide sequence ID" value="NC_000909.1"/>
</dbReference>
<dbReference type="FunCoup" id="Q58471">
    <property type="interactions" value="5"/>
</dbReference>
<dbReference type="STRING" id="243232.MJ_1071"/>
<dbReference type="PaxDb" id="243232-MJ_1071"/>
<dbReference type="EnsemblBacteria" id="AAB99078">
    <property type="protein sequence ID" value="AAB99078"/>
    <property type="gene ID" value="MJ_1071"/>
</dbReference>
<dbReference type="GeneID" id="1451967"/>
<dbReference type="KEGG" id="mja:MJ_1071"/>
<dbReference type="eggNOG" id="arCOG00433">
    <property type="taxonomic scope" value="Archaea"/>
</dbReference>
<dbReference type="HOGENOM" id="CLU_887427_0_0_2"/>
<dbReference type="InParanoid" id="Q58471"/>
<dbReference type="OrthoDB" id="60412at2157"/>
<dbReference type="PhylomeDB" id="Q58471"/>
<dbReference type="Proteomes" id="UP000000805">
    <property type="component" value="Chromosome"/>
</dbReference>
<gene>
    <name type="ordered locus">MJ1071</name>
</gene>
<keyword id="KW-1185">Reference proteome</keyword>
<organism>
    <name type="scientific">Methanocaldococcus jannaschii (strain ATCC 43067 / DSM 2661 / JAL-1 / JCM 10045 / NBRC 100440)</name>
    <name type="common">Methanococcus jannaschii</name>
    <dbReference type="NCBI Taxonomy" id="243232"/>
    <lineage>
        <taxon>Archaea</taxon>
        <taxon>Methanobacteriati</taxon>
        <taxon>Methanobacteriota</taxon>
        <taxon>Methanomada group</taxon>
        <taxon>Methanococci</taxon>
        <taxon>Methanococcales</taxon>
        <taxon>Methanocaldococcaceae</taxon>
        <taxon>Methanocaldococcus</taxon>
    </lineage>
</organism>
<accession>Q58471</accession>
<evidence type="ECO:0000305" key="1"/>
<name>Y1071_METJA</name>
<feature type="chain" id="PRO_0000107157" description="Uncharacterized protein MJ1071">
    <location>
        <begin position="1"/>
        <end position="313"/>
    </location>
</feature>
<proteinExistence type="predicted"/>
<reference key="1">
    <citation type="journal article" date="1996" name="Science">
        <title>Complete genome sequence of the methanogenic archaeon, Methanococcus jannaschii.</title>
        <authorList>
            <person name="Bult C.J."/>
            <person name="White O."/>
            <person name="Olsen G.J."/>
            <person name="Zhou L."/>
            <person name="Fleischmann R.D."/>
            <person name="Sutton G.G."/>
            <person name="Blake J.A."/>
            <person name="FitzGerald L.M."/>
            <person name="Clayton R.A."/>
            <person name="Gocayne J.D."/>
            <person name="Kerlavage A.R."/>
            <person name="Dougherty B.A."/>
            <person name="Tomb J.-F."/>
            <person name="Adams M.D."/>
            <person name="Reich C.I."/>
            <person name="Overbeek R."/>
            <person name="Kirkness E.F."/>
            <person name="Weinstock K.G."/>
            <person name="Merrick J.M."/>
            <person name="Glodek A."/>
            <person name="Scott J.L."/>
            <person name="Geoghagen N.S.M."/>
            <person name="Weidman J.F."/>
            <person name="Fuhrmann J.L."/>
            <person name="Nguyen D."/>
            <person name="Utterback T.R."/>
            <person name="Kelley J.M."/>
            <person name="Peterson J.D."/>
            <person name="Sadow P.W."/>
            <person name="Hanna M.C."/>
            <person name="Cotton M.D."/>
            <person name="Roberts K.M."/>
            <person name="Hurst M.A."/>
            <person name="Kaine B.P."/>
            <person name="Borodovsky M."/>
            <person name="Klenk H.-P."/>
            <person name="Fraser C.M."/>
            <person name="Smith H.O."/>
            <person name="Woese C.R."/>
            <person name="Venter J.C."/>
        </authorList>
    </citation>
    <scope>NUCLEOTIDE SEQUENCE [LARGE SCALE GENOMIC DNA]</scope>
    <source>
        <strain>ATCC 43067 / DSM 2661 / JAL-1 / JCM 10045 / NBRC 100440</strain>
    </source>
</reference>